<dbReference type="EC" id="1.8.4.11" evidence="1"/>
<dbReference type="EMBL" id="CP000058">
    <property type="protein sequence ID" value="AAZ33154.1"/>
    <property type="molecule type" value="Genomic_DNA"/>
</dbReference>
<dbReference type="RefSeq" id="WP_011169745.1">
    <property type="nucleotide sequence ID" value="NC_005773.3"/>
</dbReference>
<dbReference type="SMR" id="Q48CJ2"/>
<dbReference type="KEGG" id="psp:PSPPH_4802"/>
<dbReference type="eggNOG" id="COG0225">
    <property type="taxonomic scope" value="Bacteria"/>
</dbReference>
<dbReference type="HOGENOM" id="CLU_031040_10_3_6"/>
<dbReference type="Proteomes" id="UP000000551">
    <property type="component" value="Chromosome"/>
</dbReference>
<dbReference type="GO" id="GO:0005737">
    <property type="term" value="C:cytoplasm"/>
    <property type="evidence" value="ECO:0007669"/>
    <property type="project" value="TreeGrafter"/>
</dbReference>
<dbReference type="GO" id="GO:0036456">
    <property type="term" value="F:L-methionine-(S)-S-oxide reductase activity"/>
    <property type="evidence" value="ECO:0007669"/>
    <property type="project" value="TreeGrafter"/>
</dbReference>
<dbReference type="GO" id="GO:0008113">
    <property type="term" value="F:peptide-methionine (S)-S-oxide reductase activity"/>
    <property type="evidence" value="ECO:0007669"/>
    <property type="project" value="UniProtKB-UniRule"/>
</dbReference>
<dbReference type="GO" id="GO:0034599">
    <property type="term" value="P:cellular response to oxidative stress"/>
    <property type="evidence" value="ECO:0007669"/>
    <property type="project" value="TreeGrafter"/>
</dbReference>
<dbReference type="GO" id="GO:0036211">
    <property type="term" value="P:protein modification process"/>
    <property type="evidence" value="ECO:0007669"/>
    <property type="project" value="UniProtKB-UniRule"/>
</dbReference>
<dbReference type="FunFam" id="3.30.1060.10:FF:000001">
    <property type="entry name" value="Peptide methionine sulfoxide reductase MsrA"/>
    <property type="match status" value="1"/>
</dbReference>
<dbReference type="Gene3D" id="3.30.1060.10">
    <property type="entry name" value="Peptide methionine sulphoxide reductase MsrA"/>
    <property type="match status" value="1"/>
</dbReference>
<dbReference type="HAMAP" id="MF_01401">
    <property type="entry name" value="MsrA"/>
    <property type="match status" value="1"/>
</dbReference>
<dbReference type="InterPro" id="IPR002569">
    <property type="entry name" value="Met_Sox_Rdtase_MsrA_dom"/>
</dbReference>
<dbReference type="InterPro" id="IPR036509">
    <property type="entry name" value="Met_Sox_Rdtase_MsrA_sf"/>
</dbReference>
<dbReference type="InterPro" id="IPR050162">
    <property type="entry name" value="MsrA_MetSO_reductase"/>
</dbReference>
<dbReference type="NCBIfam" id="TIGR00401">
    <property type="entry name" value="msrA"/>
    <property type="match status" value="1"/>
</dbReference>
<dbReference type="PANTHER" id="PTHR42799">
    <property type="entry name" value="MITOCHONDRIAL PEPTIDE METHIONINE SULFOXIDE REDUCTASE"/>
    <property type="match status" value="1"/>
</dbReference>
<dbReference type="PANTHER" id="PTHR42799:SF2">
    <property type="entry name" value="MITOCHONDRIAL PEPTIDE METHIONINE SULFOXIDE REDUCTASE"/>
    <property type="match status" value="1"/>
</dbReference>
<dbReference type="Pfam" id="PF01625">
    <property type="entry name" value="PMSR"/>
    <property type="match status" value="1"/>
</dbReference>
<dbReference type="SUPFAM" id="SSF55068">
    <property type="entry name" value="Peptide methionine sulfoxide reductase"/>
    <property type="match status" value="1"/>
</dbReference>
<sequence length="215" mass="23409">MTLRSKILVNKNVLPTAEQALPGRETPMALPETHFVNGNPLLGPFSSNVEFAIFGLGCFWGAERRLWQQEGVVSTVVGYAGGFTPNPTYEEVCSGLTAHTEVVLVVYEPEKISYKSLLKVFWEAHNPTQGMRQGNDIGTQYRSVIYCTTPKQLDAAKASAAEFQAELRKAGLGAITTEIEEAPTVYFAEAYHQQYLAKNPQGYCGLGGTGVCLPA</sequence>
<protein>
    <recommendedName>
        <fullName evidence="1">Peptide methionine sulfoxide reductase MsrA</fullName>
        <shortName evidence="1">Protein-methionine-S-oxide reductase</shortName>
        <ecNumber evidence="1">1.8.4.11</ecNumber>
    </recommendedName>
    <alternativeName>
        <fullName evidence="1">Peptide-methionine (S)-S-oxide reductase</fullName>
        <shortName evidence="1">Peptide Met(O) reductase</shortName>
    </alternativeName>
</protein>
<proteinExistence type="inferred from homology"/>
<evidence type="ECO:0000255" key="1">
    <source>
        <dbReference type="HAMAP-Rule" id="MF_01401"/>
    </source>
</evidence>
<keyword id="KW-0560">Oxidoreductase</keyword>
<feature type="chain" id="PRO_1000068349" description="Peptide methionine sulfoxide reductase MsrA">
    <location>
        <begin position="1"/>
        <end position="215"/>
    </location>
</feature>
<feature type="active site" evidence="1">
    <location>
        <position position="58"/>
    </location>
</feature>
<name>MSRA_PSE14</name>
<accession>Q48CJ2</accession>
<reference key="1">
    <citation type="journal article" date="2005" name="J. Bacteriol.">
        <title>Whole-genome sequence analysis of Pseudomonas syringae pv. phaseolicola 1448A reveals divergence among pathovars in genes involved in virulence and transposition.</title>
        <authorList>
            <person name="Joardar V."/>
            <person name="Lindeberg M."/>
            <person name="Jackson R.W."/>
            <person name="Selengut J."/>
            <person name="Dodson R."/>
            <person name="Brinkac L.M."/>
            <person name="Daugherty S.C."/>
            <person name="DeBoy R.T."/>
            <person name="Durkin A.S."/>
            <person name="Gwinn Giglio M."/>
            <person name="Madupu R."/>
            <person name="Nelson W.C."/>
            <person name="Rosovitz M.J."/>
            <person name="Sullivan S.A."/>
            <person name="Crabtree J."/>
            <person name="Creasy T."/>
            <person name="Davidsen T.M."/>
            <person name="Haft D.H."/>
            <person name="Zafar N."/>
            <person name="Zhou L."/>
            <person name="Halpin R."/>
            <person name="Holley T."/>
            <person name="Khouri H.M."/>
            <person name="Feldblyum T.V."/>
            <person name="White O."/>
            <person name="Fraser C.M."/>
            <person name="Chatterjee A.K."/>
            <person name="Cartinhour S."/>
            <person name="Schneider D."/>
            <person name="Mansfield J.W."/>
            <person name="Collmer A."/>
            <person name="Buell R."/>
        </authorList>
    </citation>
    <scope>NUCLEOTIDE SEQUENCE [LARGE SCALE GENOMIC DNA]</scope>
    <source>
        <strain>1448A / Race 6</strain>
    </source>
</reference>
<gene>
    <name evidence="1" type="primary">msrA</name>
    <name type="ordered locus">PSPPH_4802</name>
</gene>
<organism>
    <name type="scientific">Pseudomonas savastanoi pv. phaseolicola (strain 1448A / Race 6)</name>
    <name type="common">Pseudomonas syringae pv. phaseolicola (strain 1448A / Race 6)</name>
    <dbReference type="NCBI Taxonomy" id="264730"/>
    <lineage>
        <taxon>Bacteria</taxon>
        <taxon>Pseudomonadati</taxon>
        <taxon>Pseudomonadota</taxon>
        <taxon>Gammaproteobacteria</taxon>
        <taxon>Pseudomonadales</taxon>
        <taxon>Pseudomonadaceae</taxon>
        <taxon>Pseudomonas</taxon>
    </lineage>
</organism>
<comment type="function">
    <text evidence="1">Has an important function as a repair enzyme for proteins that have been inactivated by oxidation. Catalyzes the reversible oxidation-reduction of methionine sulfoxide in proteins to methionine.</text>
</comment>
<comment type="catalytic activity">
    <reaction evidence="1">
        <text>L-methionyl-[protein] + [thioredoxin]-disulfide + H2O = L-methionyl-(S)-S-oxide-[protein] + [thioredoxin]-dithiol</text>
        <dbReference type="Rhea" id="RHEA:14217"/>
        <dbReference type="Rhea" id="RHEA-COMP:10698"/>
        <dbReference type="Rhea" id="RHEA-COMP:10700"/>
        <dbReference type="Rhea" id="RHEA-COMP:12313"/>
        <dbReference type="Rhea" id="RHEA-COMP:12315"/>
        <dbReference type="ChEBI" id="CHEBI:15377"/>
        <dbReference type="ChEBI" id="CHEBI:16044"/>
        <dbReference type="ChEBI" id="CHEBI:29950"/>
        <dbReference type="ChEBI" id="CHEBI:44120"/>
        <dbReference type="ChEBI" id="CHEBI:50058"/>
        <dbReference type="EC" id="1.8.4.11"/>
    </reaction>
</comment>
<comment type="catalytic activity">
    <reaction evidence="1">
        <text>[thioredoxin]-disulfide + L-methionine + H2O = L-methionine (S)-S-oxide + [thioredoxin]-dithiol</text>
        <dbReference type="Rhea" id="RHEA:19993"/>
        <dbReference type="Rhea" id="RHEA-COMP:10698"/>
        <dbReference type="Rhea" id="RHEA-COMP:10700"/>
        <dbReference type="ChEBI" id="CHEBI:15377"/>
        <dbReference type="ChEBI" id="CHEBI:29950"/>
        <dbReference type="ChEBI" id="CHEBI:50058"/>
        <dbReference type="ChEBI" id="CHEBI:57844"/>
        <dbReference type="ChEBI" id="CHEBI:58772"/>
        <dbReference type="EC" id="1.8.4.11"/>
    </reaction>
</comment>
<comment type="similarity">
    <text evidence="1">Belongs to the MsrA Met sulfoxide reductase family.</text>
</comment>